<protein>
    <recommendedName>
        <fullName evidence="1">Ribosome maturation factor RimP</fullName>
    </recommendedName>
</protein>
<gene>
    <name evidence="1" type="primary">rimP</name>
    <name type="ordered locus">BTH_I2566</name>
</gene>
<proteinExistence type="inferred from homology"/>
<name>RIMP_BURTA</name>
<reference key="1">
    <citation type="journal article" date="2005" name="BMC Genomics">
        <title>Bacterial genome adaptation to niches: divergence of the potential virulence genes in three Burkholderia species of different survival strategies.</title>
        <authorList>
            <person name="Kim H.S."/>
            <person name="Schell M.A."/>
            <person name="Yu Y."/>
            <person name="Ulrich R.L."/>
            <person name="Sarria S.H."/>
            <person name="Nierman W.C."/>
            <person name="DeShazer D."/>
        </authorList>
    </citation>
    <scope>NUCLEOTIDE SEQUENCE [LARGE SCALE GENOMIC DNA]</scope>
    <source>
        <strain>ATCC 700388 / DSM 13276 / CCUG 48851 / CIP 106301 / E264</strain>
    </source>
</reference>
<comment type="function">
    <text evidence="1">Required for maturation of 30S ribosomal subunits.</text>
</comment>
<comment type="subcellular location">
    <subcellularLocation>
        <location evidence="1">Cytoplasm</location>
    </subcellularLocation>
</comment>
<comment type="similarity">
    <text evidence="1">Belongs to the RimP family.</text>
</comment>
<evidence type="ECO:0000255" key="1">
    <source>
        <dbReference type="HAMAP-Rule" id="MF_01077"/>
    </source>
</evidence>
<accession>Q2SVG6</accession>
<sequence length="153" mass="17232">MQLTELIETTVTGLGYELVDLERTGRGMVCVYIDQPAGITIDDCEKVTRQLQHVLTVENIDYERLEVSSPGLDRPLKKLADFTRFAGSEAVITLKKPLDGRKTYRGILHAPNGETIGLEFERKKGEAAMLDFTLADIDKARLIPHVDFRSRKQ</sequence>
<dbReference type="EMBL" id="CP000086">
    <property type="protein sequence ID" value="ABC38524.1"/>
    <property type="molecule type" value="Genomic_DNA"/>
</dbReference>
<dbReference type="RefSeq" id="WP_004193908.1">
    <property type="nucleotide sequence ID" value="NZ_CP008785.1"/>
</dbReference>
<dbReference type="SMR" id="Q2SVG6"/>
<dbReference type="GeneID" id="93060071"/>
<dbReference type="KEGG" id="bte:BTH_I2566"/>
<dbReference type="HOGENOM" id="CLU_070525_1_0_4"/>
<dbReference type="Proteomes" id="UP000001930">
    <property type="component" value="Chromosome I"/>
</dbReference>
<dbReference type="GO" id="GO:0005829">
    <property type="term" value="C:cytosol"/>
    <property type="evidence" value="ECO:0007669"/>
    <property type="project" value="TreeGrafter"/>
</dbReference>
<dbReference type="GO" id="GO:0000028">
    <property type="term" value="P:ribosomal small subunit assembly"/>
    <property type="evidence" value="ECO:0007669"/>
    <property type="project" value="TreeGrafter"/>
</dbReference>
<dbReference type="GO" id="GO:0006412">
    <property type="term" value="P:translation"/>
    <property type="evidence" value="ECO:0007669"/>
    <property type="project" value="TreeGrafter"/>
</dbReference>
<dbReference type="CDD" id="cd01734">
    <property type="entry name" value="YlxS_C"/>
    <property type="match status" value="1"/>
</dbReference>
<dbReference type="Gene3D" id="2.30.30.180">
    <property type="entry name" value="Ribosome maturation factor RimP, C-terminal domain"/>
    <property type="match status" value="1"/>
</dbReference>
<dbReference type="Gene3D" id="3.30.300.70">
    <property type="entry name" value="RimP-like superfamily, N-terminal"/>
    <property type="match status" value="1"/>
</dbReference>
<dbReference type="HAMAP" id="MF_01077">
    <property type="entry name" value="RimP"/>
    <property type="match status" value="1"/>
</dbReference>
<dbReference type="InterPro" id="IPR003728">
    <property type="entry name" value="Ribosome_maturation_RimP"/>
</dbReference>
<dbReference type="InterPro" id="IPR028998">
    <property type="entry name" value="RimP_C"/>
</dbReference>
<dbReference type="InterPro" id="IPR036847">
    <property type="entry name" value="RimP_C_sf"/>
</dbReference>
<dbReference type="InterPro" id="IPR028989">
    <property type="entry name" value="RimP_N"/>
</dbReference>
<dbReference type="InterPro" id="IPR035956">
    <property type="entry name" value="RimP_N_sf"/>
</dbReference>
<dbReference type="NCBIfam" id="NF000929">
    <property type="entry name" value="PRK00092.2-1"/>
    <property type="match status" value="1"/>
</dbReference>
<dbReference type="PANTHER" id="PTHR33867">
    <property type="entry name" value="RIBOSOME MATURATION FACTOR RIMP"/>
    <property type="match status" value="1"/>
</dbReference>
<dbReference type="PANTHER" id="PTHR33867:SF1">
    <property type="entry name" value="RIBOSOME MATURATION FACTOR RIMP"/>
    <property type="match status" value="1"/>
</dbReference>
<dbReference type="Pfam" id="PF17384">
    <property type="entry name" value="DUF150_C"/>
    <property type="match status" value="1"/>
</dbReference>
<dbReference type="Pfam" id="PF02576">
    <property type="entry name" value="RimP_N"/>
    <property type="match status" value="1"/>
</dbReference>
<dbReference type="SUPFAM" id="SSF74942">
    <property type="entry name" value="YhbC-like, C-terminal domain"/>
    <property type="match status" value="1"/>
</dbReference>
<dbReference type="SUPFAM" id="SSF75420">
    <property type="entry name" value="YhbC-like, N-terminal domain"/>
    <property type="match status" value="1"/>
</dbReference>
<feature type="chain" id="PRO_1000064696" description="Ribosome maturation factor RimP">
    <location>
        <begin position="1"/>
        <end position="153"/>
    </location>
</feature>
<keyword id="KW-0963">Cytoplasm</keyword>
<keyword id="KW-0690">Ribosome biogenesis</keyword>
<organism>
    <name type="scientific">Burkholderia thailandensis (strain ATCC 700388 / DSM 13276 / CCUG 48851 / CIP 106301 / E264)</name>
    <dbReference type="NCBI Taxonomy" id="271848"/>
    <lineage>
        <taxon>Bacteria</taxon>
        <taxon>Pseudomonadati</taxon>
        <taxon>Pseudomonadota</taxon>
        <taxon>Betaproteobacteria</taxon>
        <taxon>Burkholderiales</taxon>
        <taxon>Burkholderiaceae</taxon>
        <taxon>Burkholderia</taxon>
        <taxon>pseudomallei group</taxon>
    </lineage>
</organism>